<feature type="chain" id="PRO_0000099141" description="DNA-directed RNA polymerase 22 kDa subunit">
    <location>
        <begin position="1"/>
        <end position="185"/>
    </location>
</feature>
<organism>
    <name type="scientific">Variola virus (isolate Human/India/Ind3/1967)</name>
    <name type="common">VARV</name>
    <name type="synonym">Smallpox virus</name>
    <dbReference type="NCBI Taxonomy" id="587200"/>
    <lineage>
        <taxon>Viruses</taxon>
        <taxon>Varidnaviria</taxon>
        <taxon>Bamfordvirae</taxon>
        <taxon>Nucleocytoviricota</taxon>
        <taxon>Pokkesviricetes</taxon>
        <taxon>Chitovirales</taxon>
        <taxon>Poxviridae</taxon>
        <taxon>Chordopoxvirinae</taxon>
        <taxon>Orthopoxvirus</taxon>
        <taxon>Variola virus</taxon>
    </lineage>
</organism>
<organismHost>
    <name type="scientific">Homo sapiens</name>
    <name type="common">Human</name>
    <dbReference type="NCBI Taxonomy" id="9606"/>
</organismHost>
<gene>
    <name type="primary">OPG103</name>
    <name type="synonym">RPO22</name>
    <name type="ORF">J4R</name>
</gene>
<keyword id="KW-0240">DNA-directed RNA polymerase</keyword>
<keyword id="KW-0548">Nucleotidyltransferase</keyword>
<keyword id="KW-1185">Reference proteome</keyword>
<keyword id="KW-0804">Transcription</keyword>
<keyword id="KW-0808">Transferase</keyword>
<keyword id="KW-0946">Virion</keyword>
<comment type="function">
    <text evidence="1">Part of the DNA-dependent RNA polymerase which catalyzes the transcription of viral DNA into RNA using the four ribonucleoside triphosphates as substrates. Responsible for the transcription of early, intermediate and late genes. DNA-dependent RNA polymerase associates with the early transcription factor (ETF), itself composed of OPG118 and OPG133, thereby allowing the early genes transcription. Late transcription, and probably also intermediate transcription, require newly synthesized RNA polymerase.</text>
</comment>
<comment type="catalytic activity">
    <reaction evidence="1">
        <text>RNA(n) + a ribonucleoside 5'-triphosphate = RNA(n+1) + diphosphate</text>
        <dbReference type="Rhea" id="RHEA:21248"/>
        <dbReference type="Rhea" id="RHEA-COMP:14527"/>
        <dbReference type="Rhea" id="RHEA-COMP:17342"/>
        <dbReference type="ChEBI" id="CHEBI:33019"/>
        <dbReference type="ChEBI" id="CHEBI:61557"/>
        <dbReference type="ChEBI" id="CHEBI:140395"/>
        <dbReference type="EC" id="2.7.7.6"/>
    </reaction>
</comment>
<comment type="subunit">
    <text evidence="1">The DNA-dependent RNA polymerase used for intermediate and late genes expression consists of eight subunits Rpo30/OPG66, Rpo7/OPG90, Rpo22/OPG103, Rpo147/OPG105, Rpo18/OPG119, Rpo19/OPG131, Rpo132/OPG151 and Rpo35/OPG156. The same holoenzyme, with the addition of the transcription-specificity factor OPG109, is used for early gene expression.</text>
</comment>
<comment type="subcellular location">
    <subcellularLocation>
        <location evidence="1">Virion</location>
    </subcellularLocation>
    <text evidence="1">All the enzymes and other proteins required to synthesize early mRNAs are packaged within the virion core along with the DNA genome. This is necessary because viral early mRNAs are synthesized within minutes after virus entry into the cell and are extruded through pores in the core particle.</text>
</comment>
<comment type="similarity">
    <text evidence="2">Belongs to the poxviridae DNA-directed RNA polymerase 22 kDa subunit family.</text>
</comment>
<evidence type="ECO:0000250" key="1">
    <source>
        <dbReference type="UniProtKB" id="P68609"/>
    </source>
</evidence>
<evidence type="ECO:0000305" key="2"/>
<sequence>MNQYNVKYLAKILCIKTEIARDPYAVINRNVLLRYTTDIQYNDLVTLITVRHKIDSMKTVFQVFNESSINYTPVDDDYGEPIIITSYLQKGHNKFPVNFLYIDVVISDLFPSFVRLNTTETNIVNSVLQTGDGKKTLRLPKMLETEIVVKILYRPNIPLKIVRFFRNNMITGVEIADRSVISVAD</sequence>
<name>RP22_VAR67</name>
<reference key="1">
    <citation type="journal article" date="1993" name="Virus Res.">
        <title>Nucleotide sequence analysis of variola virus HindIII M, L, I genome fragments.</title>
        <authorList>
            <person name="Shchelkunov S.N."/>
            <person name="Blinov V.M."/>
            <person name="Totmenin A.V."/>
            <person name="Marennikova S.S."/>
            <person name="Kolykhalov A.A."/>
            <person name="Frolov I.V."/>
            <person name="Chizhikov V.E."/>
            <person name="Gytorov V.V."/>
            <person name="Gashikov P.V."/>
            <person name="Belanov E.F."/>
            <person name="Belavin P.A."/>
            <person name="Resenchuk S.M."/>
            <person name="Andzhaparidze O.G."/>
            <person name="Sandakhchiev L.S."/>
        </authorList>
    </citation>
    <scope>NUCLEOTIDE SEQUENCE [GENOMIC DNA]</scope>
</reference>
<reference key="2">
    <citation type="journal article" date="1993" name="FEBS Lett.">
        <title>Genes of variola and vaccinia viruses necessary to overcome the host protective mechanisms.</title>
        <authorList>
            <person name="Shchelkunov S.N."/>
            <person name="Blinov V.M."/>
            <person name="Sandakhchiev L.S."/>
        </authorList>
    </citation>
    <scope>NUCLEOTIDE SEQUENCE [LARGE SCALE GENOMIC DNA]</scope>
</reference>
<protein>
    <recommendedName>
        <fullName>DNA-directed RNA polymerase 22 kDa subunit</fullName>
        <ecNumber>2.7.7.6</ecNumber>
    </recommendedName>
</protein>
<dbReference type="EC" id="2.7.7.6"/>
<dbReference type="EMBL" id="X67119">
    <property type="protein sequence ID" value="CAA47580.1"/>
    <property type="molecule type" value="Genomic_DNA"/>
</dbReference>
<dbReference type="EMBL" id="S55844">
    <property type="protein sequence ID" value="AAB24677.1"/>
    <property type="molecule type" value="Genomic_DNA"/>
</dbReference>
<dbReference type="EMBL" id="X69198">
    <property type="protein sequence ID" value="CAA49022.1"/>
    <property type="molecule type" value="Genomic_DNA"/>
</dbReference>
<dbReference type="PIR" id="F36845">
    <property type="entry name" value="F36845"/>
</dbReference>
<dbReference type="SMR" id="P33054"/>
<dbReference type="KEGG" id="vg:1486467"/>
<dbReference type="Proteomes" id="UP000002060">
    <property type="component" value="Segment"/>
</dbReference>
<dbReference type="GO" id="GO:0000428">
    <property type="term" value="C:DNA-directed RNA polymerase complex"/>
    <property type="evidence" value="ECO:0007669"/>
    <property type="project" value="UniProtKB-KW"/>
</dbReference>
<dbReference type="GO" id="GO:0044423">
    <property type="term" value="C:virion component"/>
    <property type="evidence" value="ECO:0007669"/>
    <property type="project" value="UniProtKB-KW"/>
</dbReference>
<dbReference type="GO" id="GO:0003677">
    <property type="term" value="F:DNA binding"/>
    <property type="evidence" value="ECO:0007669"/>
    <property type="project" value="InterPro"/>
</dbReference>
<dbReference type="GO" id="GO:0003899">
    <property type="term" value="F:DNA-directed RNA polymerase activity"/>
    <property type="evidence" value="ECO:0007669"/>
    <property type="project" value="UniProtKB-EC"/>
</dbReference>
<dbReference type="GO" id="GO:0019083">
    <property type="term" value="P:viral transcription"/>
    <property type="evidence" value="ECO:0007669"/>
    <property type="project" value="InterPro"/>
</dbReference>
<dbReference type="InterPro" id="IPR007937">
    <property type="entry name" value="RNA_Pol_22kDa_poxvir"/>
</dbReference>
<dbReference type="Pfam" id="PF05273">
    <property type="entry name" value="Pox_RNA_Pol_22"/>
    <property type="match status" value="1"/>
</dbReference>
<dbReference type="PIRSF" id="PIRSF000744">
    <property type="entry name" value="RPO22"/>
    <property type="match status" value="1"/>
</dbReference>
<accession>P33054</accession>
<proteinExistence type="inferred from homology"/>